<sequence>MNTINKYSKTITQDETQPAAQAMLYGIGLTEADMYKAQVGIVSTGYEGNTCNMHLNDLAKDVKFGVASENLVGLIFNTIGVSDGISNGTDGMRFSLVSRDIIADSIETVVSAQWYDAVLAVVGCDKNMPGSVMAMGRLNRPAIMIYGGSIHSGKWKGESLNIVSAFEALGKKFNNTITPEDFKGVIKNACPGAGACGGMYTANTMASAIEALGMSLPYSSSNPALSQEKKQECLDAGKAIRVLLEKDIKPKDIMTKKAFENAMTMVVVLGGSTNAVLHLIAMAHSVDIELTLQDFQKTSNNIPVLADLKPSGKYLMEDLHAVGGVPAVMKYLLENKLLHGDCLTVTGKTVAENLANIPSLHQGQTVFLPLKTPLKATGHLQILYGNLAPEGSVAKISGNEGDFFEGKAKVYNDEYTVIDGVKNGEVASGDVVVIRYCGPKGGPGMPEMLKPTSAIMGAGLGKNVALITDGRFSGGTHGFVVGHITPEAYDGGTIALVKDGDTITINTKNNTIQLKVSEEELTKRKSEWKQPKLKATKGVLYKYAQCVSSASKGCVTDN</sequence>
<evidence type="ECO:0000255" key="1">
    <source>
        <dbReference type="HAMAP-Rule" id="MF_00012"/>
    </source>
</evidence>
<gene>
    <name evidence="1" type="primary">ilvD</name>
    <name type="ordered locus">FP0449</name>
</gene>
<reference key="1">
    <citation type="journal article" date="2007" name="Nat. Biotechnol.">
        <title>Complete genome sequence of the fish pathogen Flavobacterium psychrophilum.</title>
        <authorList>
            <person name="Duchaud E."/>
            <person name="Boussaha M."/>
            <person name="Loux V."/>
            <person name="Bernardet J.-F."/>
            <person name="Michel C."/>
            <person name="Kerouault B."/>
            <person name="Mondot S."/>
            <person name="Nicolas P."/>
            <person name="Bossy R."/>
            <person name="Caron C."/>
            <person name="Bessieres P."/>
            <person name="Gibrat J.-F."/>
            <person name="Claverol S."/>
            <person name="Dumetz F."/>
            <person name="Le Henaff M."/>
            <person name="Benmansour A."/>
        </authorList>
    </citation>
    <scope>NUCLEOTIDE SEQUENCE [LARGE SCALE GENOMIC DNA]</scope>
    <source>
        <strain>ATCC 49511 / DSM 21280 / CIP 103535 / JIP02/86</strain>
    </source>
</reference>
<dbReference type="EC" id="4.2.1.9" evidence="1"/>
<dbReference type="EMBL" id="AM398681">
    <property type="protein sequence ID" value="CAL42560.1"/>
    <property type="molecule type" value="Genomic_DNA"/>
</dbReference>
<dbReference type="RefSeq" id="WP_011962618.1">
    <property type="nucleotide sequence ID" value="NC_009613.3"/>
</dbReference>
<dbReference type="RefSeq" id="YP_001295378.1">
    <property type="nucleotide sequence ID" value="NC_009613.3"/>
</dbReference>
<dbReference type="SMR" id="A6GWT7"/>
<dbReference type="STRING" id="402612.FP0449"/>
<dbReference type="EnsemblBacteria" id="CAL42560">
    <property type="protein sequence ID" value="CAL42560"/>
    <property type="gene ID" value="FP0449"/>
</dbReference>
<dbReference type="GeneID" id="66551586"/>
<dbReference type="KEGG" id="fps:FP0449"/>
<dbReference type="PATRIC" id="fig|402612.5.peg.463"/>
<dbReference type="eggNOG" id="COG0129">
    <property type="taxonomic scope" value="Bacteria"/>
</dbReference>
<dbReference type="HOGENOM" id="CLU_014271_4_2_10"/>
<dbReference type="OrthoDB" id="9807077at2"/>
<dbReference type="UniPathway" id="UPA00047">
    <property type="reaction ID" value="UER00057"/>
</dbReference>
<dbReference type="UniPathway" id="UPA00049">
    <property type="reaction ID" value="UER00061"/>
</dbReference>
<dbReference type="Proteomes" id="UP000006394">
    <property type="component" value="Chromosome"/>
</dbReference>
<dbReference type="GO" id="GO:0051537">
    <property type="term" value="F:2 iron, 2 sulfur cluster binding"/>
    <property type="evidence" value="ECO:0007669"/>
    <property type="project" value="UniProtKB-UniRule"/>
</dbReference>
<dbReference type="GO" id="GO:0004160">
    <property type="term" value="F:dihydroxy-acid dehydratase activity"/>
    <property type="evidence" value="ECO:0007669"/>
    <property type="project" value="UniProtKB-UniRule"/>
</dbReference>
<dbReference type="GO" id="GO:0000287">
    <property type="term" value="F:magnesium ion binding"/>
    <property type="evidence" value="ECO:0007669"/>
    <property type="project" value="UniProtKB-UniRule"/>
</dbReference>
<dbReference type="GO" id="GO:0009097">
    <property type="term" value="P:isoleucine biosynthetic process"/>
    <property type="evidence" value="ECO:0007669"/>
    <property type="project" value="UniProtKB-UniRule"/>
</dbReference>
<dbReference type="GO" id="GO:0009099">
    <property type="term" value="P:L-valine biosynthetic process"/>
    <property type="evidence" value="ECO:0007669"/>
    <property type="project" value="UniProtKB-UniRule"/>
</dbReference>
<dbReference type="FunFam" id="3.50.30.80:FF:000001">
    <property type="entry name" value="Dihydroxy-acid dehydratase"/>
    <property type="match status" value="1"/>
</dbReference>
<dbReference type="Gene3D" id="3.50.30.80">
    <property type="entry name" value="IlvD/EDD C-terminal domain-like"/>
    <property type="match status" value="1"/>
</dbReference>
<dbReference type="HAMAP" id="MF_00012">
    <property type="entry name" value="IlvD"/>
    <property type="match status" value="1"/>
</dbReference>
<dbReference type="InterPro" id="IPR050165">
    <property type="entry name" value="DHAD_IlvD/Edd"/>
</dbReference>
<dbReference type="InterPro" id="IPR042096">
    <property type="entry name" value="Dihydro-acid_dehy_C"/>
</dbReference>
<dbReference type="InterPro" id="IPR004404">
    <property type="entry name" value="DihydroxyA_deHydtase"/>
</dbReference>
<dbReference type="InterPro" id="IPR020558">
    <property type="entry name" value="DiOHA_6PGluconate_deHydtase_CS"/>
</dbReference>
<dbReference type="InterPro" id="IPR056740">
    <property type="entry name" value="ILV_EDD_C"/>
</dbReference>
<dbReference type="InterPro" id="IPR000581">
    <property type="entry name" value="ILV_EDD_N"/>
</dbReference>
<dbReference type="InterPro" id="IPR037237">
    <property type="entry name" value="IlvD/EDD_N"/>
</dbReference>
<dbReference type="NCBIfam" id="TIGR00110">
    <property type="entry name" value="ilvD"/>
    <property type="match status" value="1"/>
</dbReference>
<dbReference type="NCBIfam" id="NF002068">
    <property type="entry name" value="PRK00911.1"/>
    <property type="match status" value="1"/>
</dbReference>
<dbReference type="PANTHER" id="PTHR21000">
    <property type="entry name" value="DIHYDROXY-ACID DEHYDRATASE DAD"/>
    <property type="match status" value="1"/>
</dbReference>
<dbReference type="PANTHER" id="PTHR21000:SF5">
    <property type="entry name" value="DIHYDROXY-ACID DEHYDRATASE, MITOCHONDRIAL"/>
    <property type="match status" value="1"/>
</dbReference>
<dbReference type="Pfam" id="PF24877">
    <property type="entry name" value="ILV_EDD_C"/>
    <property type="match status" value="1"/>
</dbReference>
<dbReference type="Pfam" id="PF00920">
    <property type="entry name" value="ILVD_EDD_N"/>
    <property type="match status" value="1"/>
</dbReference>
<dbReference type="SUPFAM" id="SSF143975">
    <property type="entry name" value="IlvD/EDD N-terminal domain-like"/>
    <property type="match status" value="1"/>
</dbReference>
<dbReference type="SUPFAM" id="SSF52016">
    <property type="entry name" value="LeuD/IlvD-like"/>
    <property type="match status" value="1"/>
</dbReference>
<dbReference type="PROSITE" id="PS00886">
    <property type="entry name" value="ILVD_EDD_1"/>
    <property type="match status" value="1"/>
</dbReference>
<dbReference type="PROSITE" id="PS00887">
    <property type="entry name" value="ILVD_EDD_2"/>
    <property type="match status" value="1"/>
</dbReference>
<protein>
    <recommendedName>
        <fullName evidence="1">Dihydroxy-acid dehydratase</fullName>
        <shortName evidence="1">DAD</shortName>
        <ecNumber evidence="1">4.2.1.9</ecNumber>
    </recommendedName>
</protein>
<accession>A6GWT7</accession>
<comment type="function">
    <text evidence="1">Functions in the biosynthesis of branched-chain amino acids. Catalyzes the dehydration of (2R,3R)-2,3-dihydroxy-3-methylpentanoate (2,3-dihydroxy-3-methylvalerate) into 2-oxo-3-methylpentanoate (2-oxo-3-methylvalerate) and of (2R)-2,3-dihydroxy-3-methylbutanoate (2,3-dihydroxyisovalerate) into 2-oxo-3-methylbutanoate (2-oxoisovalerate), the penultimate precursor to L-isoleucine and L-valine, respectively.</text>
</comment>
<comment type="catalytic activity">
    <reaction evidence="1">
        <text>(2R)-2,3-dihydroxy-3-methylbutanoate = 3-methyl-2-oxobutanoate + H2O</text>
        <dbReference type="Rhea" id="RHEA:24809"/>
        <dbReference type="ChEBI" id="CHEBI:11851"/>
        <dbReference type="ChEBI" id="CHEBI:15377"/>
        <dbReference type="ChEBI" id="CHEBI:49072"/>
        <dbReference type="EC" id="4.2.1.9"/>
    </reaction>
    <physiologicalReaction direction="left-to-right" evidence="1">
        <dbReference type="Rhea" id="RHEA:24810"/>
    </physiologicalReaction>
</comment>
<comment type="catalytic activity">
    <reaction evidence="1">
        <text>(2R,3R)-2,3-dihydroxy-3-methylpentanoate = (S)-3-methyl-2-oxopentanoate + H2O</text>
        <dbReference type="Rhea" id="RHEA:27694"/>
        <dbReference type="ChEBI" id="CHEBI:15377"/>
        <dbReference type="ChEBI" id="CHEBI:35146"/>
        <dbReference type="ChEBI" id="CHEBI:49258"/>
        <dbReference type="EC" id="4.2.1.9"/>
    </reaction>
    <physiologicalReaction direction="left-to-right" evidence="1">
        <dbReference type="Rhea" id="RHEA:27695"/>
    </physiologicalReaction>
</comment>
<comment type="cofactor">
    <cofactor evidence="1">
        <name>[2Fe-2S] cluster</name>
        <dbReference type="ChEBI" id="CHEBI:190135"/>
    </cofactor>
    <text evidence="1">Binds 1 [2Fe-2S] cluster per subunit. This cluster acts as a Lewis acid cofactor.</text>
</comment>
<comment type="cofactor">
    <cofactor evidence="1">
        <name>Mg(2+)</name>
        <dbReference type="ChEBI" id="CHEBI:18420"/>
    </cofactor>
</comment>
<comment type="pathway">
    <text evidence="1">Amino-acid biosynthesis; L-isoleucine biosynthesis; L-isoleucine from 2-oxobutanoate: step 3/4.</text>
</comment>
<comment type="pathway">
    <text evidence="1">Amino-acid biosynthesis; L-valine biosynthesis; L-valine from pyruvate: step 3/4.</text>
</comment>
<comment type="subunit">
    <text evidence="1">Homodimer.</text>
</comment>
<comment type="similarity">
    <text evidence="1">Belongs to the IlvD/Edd family.</text>
</comment>
<feature type="chain" id="PRO_1000116275" description="Dihydroxy-acid dehydratase">
    <location>
        <begin position="1"/>
        <end position="558"/>
    </location>
</feature>
<feature type="active site" description="Proton acceptor" evidence="1">
    <location>
        <position position="473"/>
    </location>
</feature>
<feature type="binding site" evidence="1">
    <location>
        <position position="51"/>
    </location>
    <ligand>
        <name>[2Fe-2S] cluster</name>
        <dbReference type="ChEBI" id="CHEBI:190135"/>
    </ligand>
</feature>
<feature type="binding site" evidence="1">
    <location>
        <position position="83"/>
    </location>
    <ligand>
        <name>Mg(2+)</name>
        <dbReference type="ChEBI" id="CHEBI:18420"/>
    </ligand>
</feature>
<feature type="binding site" evidence="1">
    <location>
        <position position="124"/>
    </location>
    <ligand>
        <name>[2Fe-2S] cluster</name>
        <dbReference type="ChEBI" id="CHEBI:190135"/>
    </ligand>
</feature>
<feature type="binding site" evidence="1">
    <location>
        <position position="125"/>
    </location>
    <ligand>
        <name>Mg(2+)</name>
        <dbReference type="ChEBI" id="CHEBI:18420"/>
    </ligand>
</feature>
<feature type="binding site" description="via carbamate group" evidence="1">
    <location>
        <position position="126"/>
    </location>
    <ligand>
        <name>Mg(2+)</name>
        <dbReference type="ChEBI" id="CHEBI:18420"/>
    </ligand>
</feature>
<feature type="binding site" evidence="1">
    <location>
        <position position="196"/>
    </location>
    <ligand>
        <name>[2Fe-2S] cluster</name>
        <dbReference type="ChEBI" id="CHEBI:190135"/>
    </ligand>
</feature>
<feature type="binding site" evidence="1">
    <location>
        <position position="447"/>
    </location>
    <ligand>
        <name>Mg(2+)</name>
        <dbReference type="ChEBI" id="CHEBI:18420"/>
    </ligand>
</feature>
<feature type="modified residue" description="N6-carboxylysine" evidence="1">
    <location>
        <position position="126"/>
    </location>
</feature>
<proteinExistence type="inferred from homology"/>
<organism>
    <name type="scientific">Flavobacterium psychrophilum (strain ATCC 49511 / DSM 21280 / CIP 103535 / JIP02/86)</name>
    <dbReference type="NCBI Taxonomy" id="402612"/>
    <lineage>
        <taxon>Bacteria</taxon>
        <taxon>Pseudomonadati</taxon>
        <taxon>Bacteroidota</taxon>
        <taxon>Flavobacteriia</taxon>
        <taxon>Flavobacteriales</taxon>
        <taxon>Flavobacteriaceae</taxon>
        <taxon>Flavobacterium</taxon>
    </lineage>
</organism>
<keyword id="KW-0001">2Fe-2S</keyword>
<keyword id="KW-0028">Amino-acid biosynthesis</keyword>
<keyword id="KW-0100">Branched-chain amino acid biosynthesis</keyword>
<keyword id="KW-0408">Iron</keyword>
<keyword id="KW-0411">Iron-sulfur</keyword>
<keyword id="KW-0456">Lyase</keyword>
<keyword id="KW-0460">Magnesium</keyword>
<keyword id="KW-0479">Metal-binding</keyword>
<keyword id="KW-1185">Reference proteome</keyword>
<name>ILVD_FLAPJ</name>